<reference key="1">
    <citation type="journal article" date="2002" name="Nat. Biotechnol.">
        <title>Genome sequence of the dissimilatory metal ion-reducing bacterium Shewanella oneidensis.</title>
        <authorList>
            <person name="Heidelberg J.F."/>
            <person name="Paulsen I.T."/>
            <person name="Nelson K.E."/>
            <person name="Gaidos E.J."/>
            <person name="Nelson W.C."/>
            <person name="Read T.D."/>
            <person name="Eisen J.A."/>
            <person name="Seshadri R."/>
            <person name="Ward N.L."/>
            <person name="Methe B.A."/>
            <person name="Clayton R.A."/>
            <person name="Meyer T."/>
            <person name="Tsapin A."/>
            <person name="Scott J."/>
            <person name="Beanan M.J."/>
            <person name="Brinkac L.M."/>
            <person name="Daugherty S.C."/>
            <person name="DeBoy R.T."/>
            <person name="Dodson R.J."/>
            <person name="Durkin A.S."/>
            <person name="Haft D.H."/>
            <person name="Kolonay J.F."/>
            <person name="Madupu R."/>
            <person name="Peterson J.D."/>
            <person name="Umayam L.A."/>
            <person name="White O."/>
            <person name="Wolf A.M."/>
            <person name="Vamathevan J.J."/>
            <person name="Weidman J.F."/>
            <person name="Impraim M."/>
            <person name="Lee K."/>
            <person name="Berry K.J."/>
            <person name="Lee C."/>
            <person name="Mueller J."/>
            <person name="Khouri H.M."/>
            <person name="Gill J."/>
            <person name="Utterback T.R."/>
            <person name="McDonald L.A."/>
            <person name="Feldblyum T.V."/>
            <person name="Smith H.O."/>
            <person name="Venter J.C."/>
            <person name="Nealson K.H."/>
            <person name="Fraser C.M."/>
        </authorList>
    </citation>
    <scope>NUCLEOTIDE SEQUENCE [LARGE SCALE GENOMIC DNA]</scope>
    <source>
        <strain>ATCC 700550 / JCM 31522 / CIP 106686 / LMG 19005 / NCIMB 14063 / MR-1</strain>
    </source>
</reference>
<dbReference type="EMBL" id="AE014299">
    <property type="protein sequence ID" value="AAN56971.1"/>
    <property type="molecule type" value="Genomic_DNA"/>
</dbReference>
<dbReference type="RefSeq" id="NP_719527.1">
    <property type="nucleotide sequence ID" value="NC_004347.2"/>
</dbReference>
<dbReference type="RefSeq" id="WP_011073724.1">
    <property type="nucleotide sequence ID" value="NZ_CP053946.1"/>
</dbReference>
<dbReference type="PaxDb" id="211586-SO_3997"/>
<dbReference type="KEGG" id="son:SO_3997"/>
<dbReference type="PATRIC" id="fig|211586.12.peg.3876"/>
<dbReference type="eggNOG" id="COG2862">
    <property type="taxonomic scope" value="Bacteria"/>
</dbReference>
<dbReference type="HOGENOM" id="CLU_097887_1_1_6"/>
<dbReference type="OrthoDB" id="9783569at2"/>
<dbReference type="PhylomeDB" id="Q8EAB0"/>
<dbReference type="BioCyc" id="SONE211586:G1GMP-3703-MONOMER"/>
<dbReference type="Proteomes" id="UP000008186">
    <property type="component" value="Chromosome"/>
</dbReference>
<dbReference type="GO" id="GO:0005886">
    <property type="term" value="C:plasma membrane"/>
    <property type="evidence" value="ECO:0000318"/>
    <property type="project" value="GO_Central"/>
</dbReference>
<dbReference type="HAMAP" id="MF_00143">
    <property type="entry name" value="UPF0114"/>
    <property type="match status" value="1"/>
</dbReference>
<dbReference type="InterPro" id="IPR005134">
    <property type="entry name" value="UPF0114"/>
</dbReference>
<dbReference type="InterPro" id="IPR020761">
    <property type="entry name" value="UPF0114_bac"/>
</dbReference>
<dbReference type="NCBIfam" id="TIGR00645">
    <property type="entry name" value="HI0507"/>
    <property type="match status" value="1"/>
</dbReference>
<dbReference type="PANTHER" id="PTHR38596">
    <property type="entry name" value="UPF0114 PROTEIN YQHA"/>
    <property type="match status" value="1"/>
</dbReference>
<dbReference type="PANTHER" id="PTHR38596:SF1">
    <property type="entry name" value="UPF0114 PROTEIN YQHA"/>
    <property type="match status" value="1"/>
</dbReference>
<dbReference type="Pfam" id="PF03350">
    <property type="entry name" value="UPF0114"/>
    <property type="match status" value="1"/>
</dbReference>
<sequence>MEKIFERLMYASRWIMAPIYLGLSLVLLGLGIKFFQEIFHILPIIFEMTEVDLVLVTLSLIDITLVGGLIVMVMFSGYENFVSQLDVGEDSEKLSWLGKLDSGSLKNKVAASIVAISSIHLLKIFMDVKNIDNDKIMWYLLIHITFVLSAFAMGYLDKMTRK</sequence>
<organism>
    <name type="scientific">Shewanella oneidensis (strain ATCC 700550 / JCM 31522 / CIP 106686 / LMG 19005 / NCIMB 14063 / MR-1)</name>
    <dbReference type="NCBI Taxonomy" id="211586"/>
    <lineage>
        <taxon>Bacteria</taxon>
        <taxon>Pseudomonadati</taxon>
        <taxon>Pseudomonadota</taxon>
        <taxon>Gammaproteobacteria</taxon>
        <taxon>Alteromonadales</taxon>
        <taxon>Shewanellaceae</taxon>
        <taxon>Shewanella</taxon>
    </lineage>
</organism>
<protein>
    <recommendedName>
        <fullName evidence="1">UPF0114 protein SO_3997</fullName>
    </recommendedName>
</protein>
<name>Y3997_SHEON</name>
<proteinExistence type="inferred from homology"/>
<feature type="chain" id="PRO_0000214379" description="UPF0114 protein SO_3997">
    <location>
        <begin position="1"/>
        <end position="162"/>
    </location>
</feature>
<feature type="transmembrane region" description="Helical" evidence="1">
    <location>
        <begin position="10"/>
        <end position="32"/>
    </location>
</feature>
<feature type="transmembrane region" description="Helical" evidence="1">
    <location>
        <begin position="53"/>
        <end position="75"/>
    </location>
</feature>
<feature type="transmembrane region" description="Helical" evidence="1">
    <location>
        <begin position="136"/>
        <end position="156"/>
    </location>
</feature>
<accession>Q8EAB0</accession>
<comment type="subcellular location">
    <subcellularLocation>
        <location evidence="1">Cell membrane</location>
        <topology evidence="1">Multi-pass membrane protein</topology>
    </subcellularLocation>
</comment>
<comment type="similarity">
    <text evidence="1">Belongs to the UPF0114 family.</text>
</comment>
<gene>
    <name type="ordered locus">SO_3997</name>
</gene>
<evidence type="ECO:0000255" key="1">
    <source>
        <dbReference type="HAMAP-Rule" id="MF_00143"/>
    </source>
</evidence>
<keyword id="KW-1003">Cell membrane</keyword>
<keyword id="KW-0472">Membrane</keyword>
<keyword id="KW-1185">Reference proteome</keyword>
<keyword id="KW-0812">Transmembrane</keyword>
<keyword id="KW-1133">Transmembrane helix</keyword>